<organism>
    <name type="scientific">Drosophila yakuba</name>
    <name type="common">Fruit fly</name>
    <dbReference type="NCBI Taxonomy" id="7245"/>
    <lineage>
        <taxon>Eukaryota</taxon>
        <taxon>Metazoa</taxon>
        <taxon>Ecdysozoa</taxon>
        <taxon>Arthropoda</taxon>
        <taxon>Hexapoda</taxon>
        <taxon>Insecta</taxon>
        <taxon>Pterygota</taxon>
        <taxon>Neoptera</taxon>
        <taxon>Endopterygota</taxon>
        <taxon>Diptera</taxon>
        <taxon>Brachycera</taxon>
        <taxon>Muscomorpha</taxon>
        <taxon>Ephydroidea</taxon>
        <taxon>Drosophilidae</taxon>
        <taxon>Drosophila</taxon>
        <taxon>Sophophora</taxon>
    </lineage>
</organism>
<gene>
    <name evidence="1" type="primary">Tret1</name>
    <name type="ORF">GE12373</name>
</gene>
<evidence type="ECO:0000250" key="1">
    <source>
        <dbReference type="UniProtKB" id="A1Z8N1"/>
    </source>
</evidence>
<evidence type="ECO:0000255" key="2"/>
<evidence type="ECO:0000256" key="3">
    <source>
        <dbReference type="SAM" id="MobiDB-lite"/>
    </source>
</evidence>
<evidence type="ECO:0000312" key="4">
    <source>
        <dbReference type="EMBL" id="EDW90899.1"/>
    </source>
</evidence>
<dbReference type="EMBL" id="CM000158">
    <property type="protein sequence ID" value="EDW90899.1"/>
    <property type="molecule type" value="Genomic_DNA"/>
</dbReference>
<dbReference type="SMR" id="B4P624"/>
<dbReference type="GlyCosmos" id="B4P624">
    <property type="glycosylation" value="2 sites, No reported glycans"/>
</dbReference>
<dbReference type="EnsemblMetazoa" id="FBtr0258891">
    <property type="protein sequence ID" value="FBpp0257383"/>
    <property type="gene ID" value="FBgn0230119"/>
</dbReference>
<dbReference type="EnsemblMetazoa" id="XM_002091151.3">
    <property type="protein sequence ID" value="XP_002091187.1"/>
    <property type="gene ID" value="LOC6530250"/>
</dbReference>
<dbReference type="GeneID" id="6530250"/>
<dbReference type="KEGG" id="dya:Dyak_GE12373"/>
<dbReference type="CTD" id="36248"/>
<dbReference type="eggNOG" id="KOG0254">
    <property type="taxonomic scope" value="Eukaryota"/>
</dbReference>
<dbReference type="HOGENOM" id="CLU_016710_0_0_1"/>
<dbReference type="OMA" id="IFIWTQS"/>
<dbReference type="OrthoDB" id="6339427at2759"/>
<dbReference type="PhylomeDB" id="B4P624"/>
<dbReference type="Proteomes" id="UP000002282">
    <property type="component" value="Chromosome 2R"/>
</dbReference>
<dbReference type="GO" id="GO:0005886">
    <property type="term" value="C:plasma membrane"/>
    <property type="evidence" value="ECO:0000250"/>
    <property type="project" value="UniProtKB"/>
</dbReference>
<dbReference type="GO" id="GO:0055056">
    <property type="term" value="F:D-glucose transmembrane transporter activity"/>
    <property type="evidence" value="ECO:0007669"/>
    <property type="project" value="EnsemblMetazoa"/>
</dbReference>
<dbReference type="GO" id="GO:0015574">
    <property type="term" value="F:trehalose transmembrane transporter activity"/>
    <property type="evidence" value="ECO:0000250"/>
    <property type="project" value="UniProtKB"/>
</dbReference>
<dbReference type="GO" id="GO:1904659">
    <property type="term" value="P:D-glucose transmembrane transport"/>
    <property type="evidence" value="ECO:0007669"/>
    <property type="project" value="EnsemblMetazoa"/>
</dbReference>
<dbReference type="GO" id="GO:0015771">
    <property type="term" value="P:trehalose transport"/>
    <property type="evidence" value="ECO:0000250"/>
    <property type="project" value="UniProtKB"/>
</dbReference>
<dbReference type="CDD" id="cd17358">
    <property type="entry name" value="MFS_GLUT6_8_Class3_like"/>
    <property type="match status" value="1"/>
</dbReference>
<dbReference type="FunFam" id="1.20.1250.20:FF:000055">
    <property type="entry name" value="Facilitated trehalose transporter Tret1-2 homolog"/>
    <property type="match status" value="1"/>
</dbReference>
<dbReference type="Gene3D" id="1.20.1250.20">
    <property type="entry name" value="MFS general substrate transporter like domains"/>
    <property type="match status" value="1"/>
</dbReference>
<dbReference type="InterPro" id="IPR020846">
    <property type="entry name" value="MFS_dom"/>
</dbReference>
<dbReference type="InterPro" id="IPR044775">
    <property type="entry name" value="MFS_ERD6/Tret1-like"/>
</dbReference>
<dbReference type="InterPro" id="IPR005828">
    <property type="entry name" value="MFS_sugar_transport-like"/>
</dbReference>
<dbReference type="InterPro" id="IPR036259">
    <property type="entry name" value="MFS_trans_sf"/>
</dbReference>
<dbReference type="InterPro" id="IPR050549">
    <property type="entry name" value="MFS_Trehalose_Transporter"/>
</dbReference>
<dbReference type="InterPro" id="IPR003663">
    <property type="entry name" value="Sugar/inositol_transpt"/>
</dbReference>
<dbReference type="InterPro" id="IPR005829">
    <property type="entry name" value="Sugar_transporter_CS"/>
</dbReference>
<dbReference type="NCBIfam" id="TIGR00879">
    <property type="entry name" value="SP"/>
    <property type="match status" value="1"/>
</dbReference>
<dbReference type="PANTHER" id="PTHR48021">
    <property type="match status" value="1"/>
</dbReference>
<dbReference type="PANTHER" id="PTHR48021:SF96">
    <property type="entry name" value="FACILITATED TREHALOSE TRANSPORTER TRET1-1-RELATED"/>
    <property type="match status" value="1"/>
</dbReference>
<dbReference type="Pfam" id="PF00083">
    <property type="entry name" value="Sugar_tr"/>
    <property type="match status" value="1"/>
</dbReference>
<dbReference type="PRINTS" id="PR00171">
    <property type="entry name" value="SUGRTRNSPORT"/>
</dbReference>
<dbReference type="SUPFAM" id="SSF103473">
    <property type="entry name" value="MFS general substrate transporter"/>
    <property type="match status" value="1"/>
</dbReference>
<dbReference type="PROSITE" id="PS50850">
    <property type="entry name" value="MFS"/>
    <property type="match status" value="1"/>
</dbReference>
<dbReference type="PROSITE" id="PS00216">
    <property type="entry name" value="SUGAR_TRANSPORT_1"/>
    <property type="match status" value="2"/>
</dbReference>
<dbReference type="PROSITE" id="PS00217">
    <property type="entry name" value="SUGAR_TRANSPORT_2"/>
    <property type="match status" value="1"/>
</dbReference>
<keyword id="KW-1003">Cell membrane</keyword>
<keyword id="KW-0325">Glycoprotein</keyword>
<keyword id="KW-0472">Membrane</keyword>
<keyword id="KW-0597">Phosphoprotein</keyword>
<keyword id="KW-0762">Sugar transport</keyword>
<keyword id="KW-0812">Transmembrane</keyword>
<keyword id="KW-1133">Transmembrane helix</keyword>
<keyword id="KW-0813">Transport</keyword>
<name>TRET1_DROYA</name>
<accession>B4P624</accession>
<sequence>MSGRDNRGAGGGGGGHQPLSNAMGKLKEKLTRVGDELGYHRVESNLSTSNTATSLDTILPEDPFLFPQVSPQRHPQTVRTQRLLEDEPPLSFRPLLEDDDINEPPTQQQKRTPLRASGSLELTPLPPPPTSLEIREHRDRQQRGAQGDELQRSKQSLKGSRVSFERRDTGNSNTNSNKAAESSDEDSFEEKRTGFQQQKATSVDHKGILKDLKHILANDNRRQFQAKKHVSLDVKGTRFLQDLLKESSSEEEFHKTRREFQGRKHQSLDPRVTFKLDKVLQGSSTDSDEEGEDAEHKRLIHRPKDITKPVIIDLKDLESESDEDFLTSRQHFQQQRSISTDSRKSRRLYEMDEMGNKRGENIRHAVPFVRQITEDGKPKLEVYRPTTNPIFIWTQVIAALSVSLGSLVVGFVSAYTSPALVSMSDPNITSFTVTKDAGSWVGGIMPLAGLVGGVAGGPLIEYMGRRNTILATAVPFIVSSLLIACAVNVAMVLCGRFLAGFCVGIASLSLPVYLGETVQPEVRGTLGLLPTAFGNIGILVCFVAGSFMNWSMLAFLGAALPVPFLILMFLIPETPRWYVSRGREERARKALTWLRGKEADVEPELKGLMRSQADADRQATQNTMLELLKRNNLKPLSISLGLMFFQQFSGINAVIFYTVQIFKDAGSTIDGNVCTIIVGVVNFVATFIGILLIDRAGRKILLYASDIAMVLTLFVLGGFFYCKAHGPDVSHLGWLPLTCFVVYILGFSVGFGPIPWLMMGEILPAKIRGAAASVATSFNWTCTFVVTKTFQDLVGSLGAHGAFWLFGAICFVGLFFVILYVPETQGKTLEDIERKMMGRVRRMSSVANIKPLSFNM</sequence>
<feature type="chain" id="PRO_0000395550" description="Facilitated trehalose transporter Tret1">
    <location>
        <begin position="1"/>
        <end position="856"/>
    </location>
</feature>
<feature type="topological domain" description="Cytoplasmic" evidence="2">
    <location>
        <begin position="1"/>
        <end position="389"/>
    </location>
</feature>
<feature type="transmembrane region" description="Helical; Name=1" evidence="2">
    <location>
        <begin position="390"/>
        <end position="410"/>
    </location>
</feature>
<feature type="topological domain" description="Extracellular" evidence="2">
    <location>
        <begin position="411"/>
        <end position="439"/>
    </location>
</feature>
<feature type="transmembrane region" description="Helical; Name=2" evidence="2">
    <location>
        <begin position="440"/>
        <end position="460"/>
    </location>
</feature>
<feature type="topological domain" description="Cytoplasmic" evidence="2">
    <location>
        <begin position="461"/>
        <end position="472"/>
    </location>
</feature>
<feature type="transmembrane region" description="Helical; Name=3" evidence="2">
    <location>
        <begin position="473"/>
        <end position="493"/>
    </location>
</feature>
<feature type="topological domain" description="Extracellular" evidence="2">
    <location>
        <begin position="494"/>
        <end position="496"/>
    </location>
</feature>
<feature type="transmembrane region" description="Helical; Name=4" evidence="2">
    <location>
        <begin position="497"/>
        <end position="517"/>
    </location>
</feature>
<feature type="topological domain" description="Cytoplasmic" evidence="2">
    <location>
        <begin position="518"/>
        <end position="527"/>
    </location>
</feature>
<feature type="transmembrane region" description="Helical; Name=5" evidence="2">
    <location>
        <begin position="528"/>
        <end position="548"/>
    </location>
</feature>
<feature type="topological domain" description="Extracellular" evidence="2">
    <location>
        <begin position="549"/>
        <end position="551"/>
    </location>
</feature>
<feature type="transmembrane region" description="Helical; Name=6" evidence="2">
    <location>
        <begin position="552"/>
        <end position="572"/>
    </location>
</feature>
<feature type="topological domain" description="Cytoplasmic" evidence="2">
    <location>
        <begin position="573"/>
        <end position="635"/>
    </location>
</feature>
<feature type="transmembrane region" description="Helical; Name=7" evidence="2">
    <location>
        <begin position="636"/>
        <end position="656"/>
    </location>
</feature>
<feature type="topological domain" description="Extracellular" evidence="2">
    <location>
        <begin position="657"/>
        <end position="672"/>
    </location>
</feature>
<feature type="transmembrane region" description="Helical; Name=8" evidence="2">
    <location>
        <begin position="673"/>
        <end position="693"/>
    </location>
</feature>
<feature type="topological domain" description="Cytoplasmic" evidence="2">
    <location>
        <begin position="694"/>
        <end position="699"/>
    </location>
</feature>
<feature type="transmembrane region" description="Helical; Name=9" evidence="2">
    <location>
        <begin position="700"/>
        <end position="720"/>
    </location>
</feature>
<feature type="topological domain" description="Extracellular" evidence="2">
    <location>
        <begin position="721"/>
        <end position="739"/>
    </location>
</feature>
<feature type="transmembrane region" description="Helical; Name=10" evidence="2">
    <location>
        <begin position="740"/>
        <end position="760"/>
    </location>
</feature>
<feature type="topological domain" description="Cytoplasmic" evidence="2">
    <location>
        <begin position="761"/>
        <end position="766"/>
    </location>
</feature>
<feature type="transmembrane region" description="Helical; Name=11" evidence="2">
    <location>
        <begin position="767"/>
        <end position="787"/>
    </location>
</feature>
<feature type="topological domain" description="Extracellular" evidence="2">
    <location>
        <begin position="788"/>
        <end position="800"/>
    </location>
</feature>
<feature type="transmembrane region" description="Helical; Name=12" evidence="2">
    <location>
        <begin position="801"/>
        <end position="821"/>
    </location>
</feature>
<feature type="topological domain" description="Cytoplasmic" evidence="2">
    <location>
        <begin position="822"/>
        <end position="856"/>
    </location>
</feature>
<feature type="region of interest" description="Disordered" evidence="3">
    <location>
        <begin position="1"/>
        <end position="29"/>
    </location>
</feature>
<feature type="region of interest" description="Disordered" evidence="3">
    <location>
        <begin position="62"/>
        <end position="202"/>
    </location>
</feature>
<feature type="region of interest" description="Disordered" evidence="3">
    <location>
        <begin position="326"/>
        <end position="345"/>
    </location>
</feature>
<feature type="compositionally biased region" description="Polar residues" evidence="3">
    <location>
        <begin position="69"/>
        <end position="80"/>
    </location>
</feature>
<feature type="compositionally biased region" description="Basic and acidic residues" evidence="3">
    <location>
        <begin position="133"/>
        <end position="142"/>
    </location>
</feature>
<feature type="compositionally biased region" description="Polar residues" evidence="3">
    <location>
        <begin position="170"/>
        <end position="180"/>
    </location>
</feature>
<feature type="compositionally biased region" description="Polar residues" evidence="3">
    <location>
        <begin position="329"/>
        <end position="340"/>
    </location>
</feature>
<feature type="modified residue" description="Phosphoserine" evidence="1">
    <location>
        <position position="247"/>
    </location>
</feature>
<feature type="modified residue" description="Phosphoserine" evidence="1">
    <location>
        <position position="248"/>
    </location>
</feature>
<feature type="modified residue" description="Phosphoserine" evidence="1">
    <location>
        <position position="249"/>
    </location>
</feature>
<feature type="modified residue" description="Phosphoserine" evidence="1">
    <location>
        <position position="319"/>
    </location>
</feature>
<feature type="modified residue" description="Phosphoserine" evidence="1">
    <location>
        <position position="321"/>
    </location>
</feature>
<feature type="modified residue" description="Phosphoserine" evidence="1">
    <location>
        <position position="844"/>
    </location>
</feature>
<feature type="modified residue" description="Phosphoserine" evidence="1">
    <location>
        <position position="845"/>
    </location>
</feature>
<feature type="glycosylation site" description="N-linked (GlcNAc...) asparagine" evidence="2">
    <location>
        <position position="427"/>
    </location>
</feature>
<feature type="glycosylation site" description="N-linked (GlcNAc...) asparagine" evidence="2">
    <location>
        <position position="549"/>
    </location>
</feature>
<proteinExistence type="inferred from homology"/>
<reference evidence="4" key="1">
    <citation type="journal article" date="2007" name="Nature">
        <title>Evolution of genes and genomes on the Drosophila phylogeny.</title>
        <authorList>
            <consortium name="Drosophila 12 genomes consortium"/>
        </authorList>
    </citation>
    <scope>NUCLEOTIDE SEQUENCE [LARGE SCALE GENOMIC DNA]</scope>
    <source>
        <strain evidence="4">Tai18E2 / Tucson 14021-0261.01</strain>
    </source>
</reference>
<comment type="function">
    <text evidence="1">Low-capacity facilitative transporter for trehalose. Does not transport maltose, sucrose or lactose. Mediates the bidirectional transfer of trehalose. Responsible for the transport of trehalose synthesized in the fat body and the incorporation of trehalose into other tissues that require a carbon source, thereby regulating trehalose levels in the hemolymph (By similarity).</text>
</comment>
<comment type="subcellular location">
    <subcellularLocation>
        <location evidence="1">Cell membrane</location>
        <topology evidence="1">Multi-pass membrane protein</topology>
    </subcellularLocation>
</comment>
<comment type="similarity">
    <text evidence="1 2">Belongs to the major facilitator superfamily. Sugar transporter (TC 2.A.1.1) family. Trehalose transporter subfamily.</text>
</comment>
<protein>
    <recommendedName>
        <fullName evidence="1">Facilitated trehalose transporter Tret1</fullName>
    </recommendedName>
</protein>